<gene>
    <name type="ordered locus">Os02g0161200</name>
    <name type="ordered locus">LOC_Os02g06584</name>
    <name type="ORF">B1103G11.54</name>
    <name type="ORF">OJ9003_G05.19</name>
</gene>
<keyword id="KW-0175">Coiled coil</keyword>
<keyword id="KW-0238">DNA-binding</keyword>
<keyword id="KW-0479">Metal-binding</keyword>
<keyword id="KW-1185">Reference proteome</keyword>
<keyword id="KW-0862">Zinc</keyword>
<keyword id="KW-0863">Zinc-finger</keyword>
<dbReference type="EMBL" id="AP004126">
    <property type="protein sequence ID" value="BAD25207.1"/>
    <property type="molecule type" value="Genomic_DNA"/>
</dbReference>
<dbReference type="EMBL" id="AP004843">
    <property type="protein sequence ID" value="BAD28055.1"/>
    <property type="molecule type" value="Genomic_DNA"/>
</dbReference>
<dbReference type="EMBL" id="AP008208">
    <property type="protein sequence ID" value="BAF07890.1"/>
    <property type="molecule type" value="Genomic_DNA"/>
</dbReference>
<dbReference type="EMBL" id="AP014958">
    <property type="protein sequence ID" value="BAS77111.1"/>
    <property type="molecule type" value="Genomic_DNA"/>
</dbReference>
<dbReference type="EMBL" id="AK065198">
    <property type="protein sequence ID" value="BAG89412.1"/>
    <property type="molecule type" value="mRNA"/>
</dbReference>
<dbReference type="EMBL" id="AK122103">
    <property type="status" value="NOT_ANNOTATED_CDS"/>
    <property type="molecule type" value="mRNA"/>
</dbReference>
<dbReference type="EMBL" id="AB117992">
    <property type="protein sequence ID" value="BAD11333.1"/>
    <property type="molecule type" value="mRNA"/>
</dbReference>
<dbReference type="RefSeq" id="XP_015624712.1">
    <property type="nucleotide sequence ID" value="XM_015769226.1"/>
</dbReference>
<dbReference type="SMR" id="Q6H7U2"/>
<dbReference type="FunCoup" id="Q6H7U2">
    <property type="interactions" value="1462"/>
</dbReference>
<dbReference type="STRING" id="39947.Q6H7U2"/>
<dbReference type="PaxDb" id="39947-Q6H7U2"/>
<dbReference type="EnsemblPlants" id="Os02t0161200-01">
    <property type="protein sequence ID" value="Os02t0161200-01"/>
    <property type="gene ID" value="Os02g0161200"/>
</dbReference>
<dbReference type="Gramene" id="Os02t0161200-01">
    <property type="protein sequence ID" value="Os02t0161200-01"/>
    <property type="gene ID" value="Os02g0161200"/>
</dbReference>
<dbReference type="KEGG" id="dosa:Os02g0161200"/>
<dbReference type="eggNOG" id="ENOG502QQDM">
    <property type="taxonomic scope" value="Eukaryota"/>
</dbReference>
<dbReference type="HOGENOM" id="CLU_052898_0_1_1"/>
<dbReference type="InParanoid" id="Q6H7U2"/>
<dbReference type="OMA" id="EAYNNHS"/>
<dbReference type="OrthoDB" id="665283at2759"/>
<dbReference type="Proteomes" id="UP000000763">
    <property type="component" value="Chromosome 2"/>
</dbReference>
<dbReference type="Proteomes" id="UP000059680">
    <property type="component" value="Chromosome 2"/>
</dbReference>
<dbReference type="GO" id="GO:0003677">
    <property type="term" value="F:DNA binding"/>
    <property type="evidence" value="ECO:0007669"/>
    <property type="project" value="UniProtKB-KW"/>
</dbReference>
<dbReference type="GO" id="GO:0008270">
    <property type="term" value="F:zinc ion binding"/>
    <property type="evidence" value="ECO:0007669"/>
    <property type="project" value="UniProtKB-KW"/>
</dbReference>
<dbReference type="Gene3D" id="4.10.1000.10">
    <property type="entry name" value="Zinc finger, CCCH-type"/>
    <property type="match status" value="1"/>
</dbReference>
<dbReference type="InterPro" id="IPR045868">
    <property type="entry name" value="Znf_C3H13/40"/>
</dbReference>
<dbReference type="InterPro" id="IPR000571">
    <property type="entry name" value="Znf_CCCH"/>
</dbReference>
<dbReference type="InterPro" id="IPR036855">
    <property type="entry name" value="Znf_CCCH_sf"/>
</dbReference>
<dbReference type="PANTHER" id="PTHR38160:SF4">
    <property type="entry name" value="ZINC FINGER CCCH DOMAIN-CONTAINING PROTEIN 13"/>
    <property type="match status" value="1"/>
</dbReference>
<dbReference type="PANTHER" id="PTHR38160">
    <property type="entry name" value="ZINC FINGER CCCH DOMAIN-CONTAINING PROTEIN 40"/>
    <property type="match status" value="1"/>
</dbReference>
<dbReference type="Pfam" id="PF00642">
    <property type="entry name" value="zf-CCCH"/>
    <property type="match status" value="1"/>
</dbReference>
<dbReference type="SMART" id="SM00356">
    <property type="entry name" value="ZnF_C3H1"/>
    <property type="match status" value="1"/>
</dbReference>
<dbReference type="SUPFAM" id="SSF90229">
    <property type="entry name" value="CCCH zinc finger"/>
    <property type="match status" value="1"/>
</dbReference>
<dbReference type="PROSITE" id="PS50103">
    <property type="entry name" value="ZF_C3H1"/>
    <property type="match status" value="1"/>
</dbReference>
<evidence type="ECO:0000255" key="1"/>
<evidence type="ECO:0000255" key="2">
    <source>
        <dbReference type="PROSITE-ProRule" id="PRU00723"/>
    </source>
</evidence>
<evidence type="ECO:0000256" key="3">
    <source>
        <dbReference type="SAM" id="MobiDB-lite"/>
    </source>
</evidence>
<evidence type="ECO:0000305" key="4"/>
<organism>
    <name type="scientific">Oryza sativa subsp. japonica</name>
    <name type="common">Rice</name>
    <dbReference type="NCBI Taxonomy" id="39947"/>
    <lineage>
        <taxon>Eukaryota</taxon>
        <taxon>Viridiplantae</taxon>
        <taxon>Streptophyta</taxon>
        <taxon>Embryophyta</taxon>
        <taxon>Tracheophyta</taxon>
        <taxon>Spermatophyta</taxon>
        <taxon>Magnoliopsida</taxon>
        <taxon>Liliopsida</taxon>
        <taxon>Poales</taxon>
        <taxon>Poaceae</taxon>
        <taxon>BOP clade</taxon>
        <taxon>Oryzoideae</taxon>
        <taxon>Oryzeae</taxon>
        <taxon>Oryzinae</taxon>
        <taxon>Oryza</taxon>
        <taxon>Oryza sativa</taxon>
    </lineage>
</organism>
<protein>
    <recommendedName>
        <fullName>Zinc finger CCCH domain-containing protein 13</fullName>
        <shortName>OsC3H13</shortName>
    </recommendedName>
    <alternativeName>
        <fullName>BRI1-kinase domain-interacting protein 105</fullName>
        <shortName>BIP105</shortName>
    </alternativeName>
</protein>
<name>C3H13_ORYSJ</name>
<accession>Q6H7U2</accession>
<accession>B7EAL5</accession>
<accession>Q762A9</accession>
<sequence length="426" mass="49077">MLGPPRRGPAYKTKLCALWQRGNCNRDTCSFAHGHGDIRRPPSSRGAFTHHPGRRDYRAGDFRGRIDRRFSPRRRHSPGRESRGHRPLYDRRPSSRERDSSYSRSPSRKSERRHEKKTDDGETNSSRSLSLSDNNDEKKKDKFSSGDEKEDHEKQLKQIRLDMEALRDDKTQMEVILDEKIDEVRKISSKVNDLEVQLRREKDECHRMTSKMKKFIKAHARFLKAQEEVKRSQARFERLGDLLASDILKRGANEEGSSVNEDLNERSPNTAATKKRSIPYSTSEEAKAVKKRRERDSDTMTRSDKYRSDVTDFDKTSKGTEATKSLYLKKKLWEDEKSKLGANIFTEKVKGSPVRHVLPSTGMAAHAIDDLNEAIELEDRHESIDALLENDADDKTRSPAIPLQPPPVVQNAYEQYEGDDEEVDVE</sequence>
<reference key="1">
    <citation type="journal article" date="2005" name="Nature">
        <title>The map-based sequence of the rice genome.</title>
        <authorList>
            <consortium name="International rice genome sequencing project (IRGSP)"/>
        </authorList>
    </citation>
    <scope>NUCLEOTIDE SEQUENCE [LARGE SCALE GENOMIC DNA]</scope>
    <source>
        <strain>cv. Nipponbare</strain>
    </source>
</reference>
<reference key="2">
    <citation type="journal article" date="2008" name="Nucleic Acids Res.">
        <title>The rice annotation project database (RAP-DB): 2008 update.</title>
        <authorList>
            <consortium name="The rice annotation project (RAP)"/>
        </authorList>
    </citation>
    <scope>GENOME REANNOTATION</scope>
    <source>
        <strain>cv. Nipponbare</strain>
    </source>
</reference>
<reference key="3">
    <citation type="journal article" date="2013" name="Rice">
        <title>Improvement of the Oryza sativa Nipponbare reference genome using next generation sequence and optical map data.</title>
        <authorList>
            <person name="Kawahara Y."/>
            <person name="de la Bastide M."/>
            <person name="Hamilton J.P."/>
            <person name="Kanamori H."/>
            <person name="McCombie W.R."/>
            <person name="Ouyang S."/>
            <person name="Schwartz D.C."/>
            <person name="Tanaka T."/>
            <person name="Wu J."/>
            <person name="Zhou S."/>
            <person name="Childs K.L."/>
            <person name="Davidson R.M."/>
            <person name="Lin H."/>
            <person name="Quesada-Ocampo L."/>
            <person name="Vaillancourt B."/>
            <person name="Sakai H."/>
            <person name="Lee S.S."/>
            <person name="Kim J."/>
            <person name="Numa H."/>
            <person name="Itoh T."/>
            <person name="Buell C.R."/>
            <person name="Matsumoto T."/>
        </authorList>
    </citation>
    <scope>GENOME REANNOTATION</scope>
    <source>
        <strain>cv. Nipponbare</strain>
    </source>
</reference>
<reference key="4">
    <citation type="journal article" date="2003" name="Science">
        <title>Collection, mapping, and annotation of over 28,000 cDNA clones from japonica rice.</title>
        <authorList>
            <consortium name="The rice full-length cDNA consortium"/>
        </authorList>
    </citation>
    <scope>NUCLEOTIDE SEQUENCE [LARGE SCALE MRNA]</scope>
    <source>
        <strain>cv. Nipponbare</strain>
    </source>
</reference>
<reference key="5">
    <citation type="journal article" date="2004" name="Plant Biotechnol.">
        <title>Two proton pump interactors identified from a direct phosphorylation screening of a rice cDNA library by using a recombinant BRI1 receptor kinase.</title>
        <authorList>
            <person name="Hirabayashi S."/>
            <person name="Matsushita Y."/>
            <person name="Sato M."/>
            <person name="Oh-i R."/>
            <person name="Kasahara M."/>
            <person name="Abe H."/>
            <person name="Nyunoya H."/>
        </authorList>
    </citation>
    <scope>NUCLEOTIDE SEQUENCE [MRNA] OF 149-426</scope>
    <source>
        <strain>cv. Nipponbare</strain>
    </source>
</reference>
<reference key="6">
    <citation type="journal article" date="2008" name="BMC Genomics">
        <title>Genome-wide analysis of CCCH zinc finger family in Arabidopsis and rice.</title>
        <authorList>
            <person name="Wang D."/>
            <person name="Guo Y."/>
            <person name="Wu C."/>
            <person name="Yang G."/>
            <person name="Li Y."/>
            <person name="Zheng C."/>
        </authorList>
    </citation>
    <scope>NOMENCLATURE</scope>
</reference>
<feature type="chain" id="PRO_0000346809" description="Zinc finger CCCH domain-containing protein 13">
    <location>
        <begin position="1"/>
        <end position="426"/>
    </location>
</feature>
<feature type="zinc finger region" description="C3H1-type" evidence="2">
    <location>
        <begin position="10"/>
        <end position="36"/>
    </location>
</feature>
<feature type="region of interest" description="Disordered" evidence="3">
    <location>
        <begin position="34"/>
        <end position="155"/>
    </location>
</feature>
<feature type="region of interest" description="Disordered" evidence="3">
    <location>
        <begin position="253"/>
        <end position="317"/>
    </location>
</feature>
<feature type="region of interest" description="Disordered" evidence="3">
    <location>
        <begin position="390"/>
        <end position="426"/>
    </location>
</feature>
<feature type="coiled-coil region" evidence="1">
    <location>
        <begin position="144"/>
        <end position="245"/>
    </location>
</feature>
<feature type="compositionally biased region" description="Basic and acidic residues" evidence="3">
    <location>
        <begin position="54"/>
        <end position="70"/>
    </location>
</feature>
<feature type="compositionally biased region" description="Basic and acidic residues" evidence="3">
    <location>
        <begin position="78"/>
        <end position="101"/>
    </location>
</feature>
<feature type="compositionally biased region" description="Basic and acidic residues" evidence="3">
    <location>
        <begin position="108"/>
        <end position="120"/>
    </location>
</feature>
<feature type="compositionally biased region" description="Low complexity" evidence="3">
    <location>
        <begin position="124"/>
        <end position="133"/>
    </location>
</feature>
<feature type="compositionally biased region" description="Basic and acidic residues" evidence="3">
    <location>
        <begin position="135"/>
        <end position="155"/>
    </location>
</feature>
<feature type="compositionally biased region" description="Polar residues" evidence="3">
    <location>
        <begin position="255"/>
        <end position="272"/>
    </location>
</feature>
<feature type="compositionally biased region" description="Basic and acidic residues" evidence="3">
    <location>
        <begin position="284"/>
        <end position="317"/>
    </location>
</feature>
<feature type="compositionally biased region" description="Acidic residues" evidence="3">
    <location>
        <begin position="416"/>
        <end position="426"/>
    </location>
</feature>
<feature type="sequence conflict" description="In Ref. 4; AK122103." evidence="4" ref="4">
    <original>M</original>
    <variation>V</variation>
    <location>
        <position position="300"/>
    </location>
</feature>
<feature type="sequence conflict" description="In Ref. 4; AK122103." evidence="4" ref="4">
    <original>R</original>
    <variation>G</variation>
    <location>
        <position position="307"/>
    </location>
</feature>
<proteinExistence type="evidence at transcript level"/>